<comment type="function">
    <text evidence="1">Transfers the 4'-phosphopantetheine moiety from coenzyme A to a Ser of acyl-carrier-protein.</text>
</comment>
<comment type="catalytic activity">
    <reaction evidence="1">
        <text>apo-[ACP] + CoA = holo-[ACP] + adenosine 3',5'-bisphosphate + H(+)</text>
        <dbReference type="Rhea" id="RHEA:12068"/>
        <dbReference type="Rhea" id="RHEA-COMP:9685"/>
        <dbReference type="Rhea" id="RHEA-COMP:9690"/>
        <dbReference type="ChEBI" id="CHEBI:15378"/>
        <dbReference type="ChEBI" id="CHEBI:29999"/>
        <dbReference type="ChEBI" id="CHEBI:57287"/>
        <dbReference type="ChEBI" id="CHEBI:58343"/>
        <dbReference type="ChEBI" id="CHEBI:64479"/>
        <dbReference type="EC" id="2.7.8.7"/>
    </reaction>
</comment>
<comment type="cofactor">
    <cofactor evidence="1">
        <name>Mg(2+)</name>
        <dbReference type="ChEBI" id="CHEBI:18420"/>
    </cofactor>
</comment>
<comment type="subcellular location">
    <subcellularLocation>
        <location evidence="1">Cytoplasm</location>
    </subcellularLocation>
</comment>
<comment type="similarity">
    <text evidence="1">Belongs to the P-Pant transferase superfamily. AcpS family.</text>
</comment>
<dbReference type="EC" id="2.7.8.7" evidence="1"/>
<dbReference type="EMBL" id="CU928164">
    <property type="protein sequence ID" value="CAR18890.1"/>
    <property type="molecule type" value="Genomic_DNA"/>
</dbReference>
<dbReference type="RefSeq" id="WP_000986029.1">
    <property type="nucleotide sequence ID" value="NC_011750.1"/>
</dbReference>
<dbReference type="RefSeq" id="YP_002408706.1">
    <property type="nucleotide sequence ID" value="NC_011750.1"/>
</dbReference>
<dbReference type="SMR" id="B7NRL6"/>
<dbReference type="STRING" id="585057.ECIAI39_2768"/>
<dbReference type="GeneID" id="93774528"/>
<dbReference type="KEGG" id="ect:ECIAI39_2768"/>
<dbReference type="PATRIC" id="fig|585057.6.peg.2876"/>
<dbReference type="HOGENOM" id="CLU_089696_3_1_6"/>
<dbReference type="Proteomes" id="UP000000749">
    <property type="component" value="Chromosome"/>
</dbReference>
<dbReference type="GO" id="GO:0005737">
    <property type="term" value="C:cytoplasm"/>
    <property type="evidence" value="ECO:0007669"/>
    <property type="project" value="UniProtKB-SubCell"/>
</dbReference>
<dbReference type="GO" id="GO:0008897">
    <property type="term" value="F:holo-[acyl-carrier-protein] synthase activity"/>
    <property type="evidence" value="ECO:0007669"/>
    <property type="project" value="UniProtKB-UniRule"/>
</dbReference>
<dbReference type="GO" id="GO:0000287">
    <property type="term" value="F:magnesium ion binding"/>
    <property type="evidence" value="ECO:0007669"/>
    <property type="project" value="UniProtKB-UniRule"/>
</dbReference>
<dbReference type="GO" id="GO:0006633">
    <property type="term" value="P:fatty acid biosynthetic process"/>
    <property type="evidence" value="ECO:0007669"/>
    <property type="project" value="UniProtKB-UniRule"/>
</dbReference>
<dbReference type="FunFam" id="3.90.470.20:FF:000001">
    <property type="entry name" value="Holo-[acyl-carrier-protein] synthase"/>
    <property type="match status" value="1"/>
</dbReference>
<dbReference type="Gene3D" id="3.90.470.20">
    <property type="entry name" value="4'-phosphopantetheinyl transferase domain"/>
    <property type="match status" value="1"/>
</dbReference>
<dbReference type="HAMAP" id="MF_00101">
    <property type="entry name" value="AcpS"/>
    <property type="match status" value="1"/>
</dbReference>
<dbReference type="InterPro" id="IPR008278">
    <property type="entry name" value="4-PPantetheinyl_Trfase_dom"/>
</dbReference>
<dbReference type="InterPro" id="IPR037143">
    <property type="entry name" value="4-PPantetheinyl_Trfase_dom_sf"/>
</dbReference>
<dbReference type="InterPro" id="IPR002582">
    <property type="entry name" value="ACPS"/>
</dbReference>
<dbReference type="InterPro" id="IPR004568">
    <property type="entry name" value="Ppantetheine-prot_Trfase_dom"/>
</dbReference>
<dbReference type="NCBIfam" id="TIGR00516">
    <property type="entry name" value="acpS"/>
    <property type="match status" value="1"/>
</dbReference>
<dbReference type="NCBIfam" id="TIGR00556">
    <property type="entry name" value="pantethn_trn"/>
    <property type="match status" value="1"/>
</dbReference>
<dbReference type="Pfam" id="PF01648">
    <property type="entry name" value="ACPS"/>
    <property type="match status" value="1"/>
</dbReference>
<dbReference type="SUPFAM" id="SSF56214">
    <property type="entry name" value="4'-phosphopantetheinyl transferase"/>
    <property type="match status" value="1"/>
</dbReference>
<gene>
    <name evidence="1" type="primary">acpS</name>
    <name type="ordered locus">ECIAI39_2768</name>
</gene>
<protein>
    <recommendedName>
        <fullName evidence="1">Holo-[acyl-carrier-protein] synthase</fullName>
        <shortName evidence="1">Holo-ACP synthase</shortName>
        <ecNumber evidence="1">2.7.8.7</ecNumber>
    </recommendedName>
    <alternativeName>
        <fullName evidence="1">4'-phosphopantetheinyl transferase AcpS</fullName>
    </alternativeName>
</protein>
<accession>B7NRL6</accession>
<reference key="1">
    <citation type="journal article" date="2009" name="PLoS Genet.">
        <title>Organised genome dynamics in the Escherichia coli species results in highly diverse adaptive paths.</title>
        <authorList>
            <person name="Touchon M."/>
            <person name="Hoede C."/>
            <person name="Tenaillon O."/>
            <person name="Barbe V."/>
            <person name="Baeriswyl S."/>
            <person name="Bidet P."/>
            <person name="Bingen E."/>
            <person name="Bonacorsi S."/>
            <person name="Bouchier C."/>
            <person name="Bouvet O."/>
            <person name="Calteau A."/>
            <person name="Chiapello H."/>
            <person name="Clermont O."/>
            <person name="Cruveiller S."/>
            <person name="Danchin A."/>
            <person name="Diard M."/>
            <person name="Dossat C."/>
            <person name="Karoui M.E."/>
            <person name="Frapy E."/>
            <person name="Garry L."/>
            <person name="Ghigo J.M."/>
            <person name="Gilles A.M."/>
            <person name="Johnson J."/>
            <person name="Le Bouguenec C."/>
            <person name="Lescat M."/>
            <person name="Mangenot S."/>
            <person name="Martinez-Jehanne V."/>
            <person name="Matic I."/>
            <person name="Nassif X."/>
            <person name="Oztas S."/>
            <person name="Petit M.A."/>
            <person name="Pichon C."/>
            <person name="Rouy Z."/>
            <person name="Ruf C.S."/>
            <person name="Schneider D."/>
            <person name="Tourret J."/>
            <person name="Vacherie B."/>
            <person name="Vallenet D."/>
            <person name="Medigue C."/>
            <person name="Rocha E.P.C."/>
            <person name="Denamur E."/>
        </authorList>
    </citation>
    <scope>NUCLEOTIDE SEQUENCE [LARGE SCALE GENOMIC DNA]</scope>
    <source>
        <strain>IAI39 / ExPEC</strain>
    </source>
</reference>
<organism>
    <name type="scientific">Escherichia coli O7:K1 (strain IAI39 / ExPEC)</name>
    <dbReference type="NCBI Taxonomy" id="585057"/>
    <lineage>
        <taxon>Bacteria</taxon>
        <taxon>Pseudomonadati</taxon>
        <taxon>Pseudomonadota</taxon>
        <taxon>Gammaproteobacteria</taxon>
        <taxon>Enterobacterales</taxon>
        <taxon>Enterobacteriaceae</taxon>
        <taxon>Escherichia</taxon>
    </lineage>
</organism>
<sequence length="126" mass="14094">MAILGLGTDIVEIARIEAVIARSGERLARRVLSDNEWAIWKTHHQPVRFLAKRFAVKEAAAKAFGTGIRNGLAFNQFEVFNDELGKPRLRLWGEALKLAEKLGVVNMHVTLADERHYACATVIIES</sequence>
<evidence type="ECO:0000255" key="1">
    <source>
        <dbReference type="HAMAP-Rule" id="MF_00101"/>
    </source>
</evidence>
<keyword id="KW-0963">Cytoplasm</keyword>
<keyword id="KW-0275">Fatty acid biosynthesis</keyword>
<keyword id="KW-0276">Fatty acid metabolism</keyword>
<keyword id="KW-0444">Lipid biosynthesis</keyword>
<keyword id="KW-0443">Lipid metabolism</keyword>
<keyword id="KW-0460">Magnesium</keyword>
<keyword id="KW-0479">Metal-binding</keyword>
<keyword id="KW-0808">Transferase</keyword>
<feature type="chain" id="PRO_1000117349" description="Holo-[acyl-carrier-protein] synthase">
    <location>
        <begin position="1"/>
        <end position="126"/>
    </location>
</feature>
<feature type="binding site" evidence="1">
    <location>
        <position position="9"/>
    </location>
    <ligand>
        <name>Mg(2+)</name>
        <dbReference type="ChEBI" id="CHEBI:18420"/>
    </ligand>
</feature>
<feature type="binding site" evidence="1">
    <location>
        <position position="58"/>
    </location>
    <ligand>
        <name>Mg(2+)</name>
        <dbReference type="ChEBI" id="CHEBI:18420"/>
    </ligand>
</feature>
<name>ACPS_ECO7I</name>
<proteinExistence type="inferred from homology"/>